<dbReference type="EMBL" id="AP008231">
    <property type="protein sequence ID" value="BAD78616.1"/>
    <property type="molecule type" value="Genomic_DNA"/>
</dbReference>
<dbReference type="RefSeq" id="WP_011242738.1">
    <property type="nucleotide sequence ID" value="NZ_CP085785.1"/>
</dbReference>
<dbReference type="SMR" id="Q5N503"/>
<dbReference type="GeneID" id="72429976"/>
<dbReference type="KEGG" id="syc:syc0426_c"/>
<dbReference type="eggNOG" id="COG0238">
    <property type="taxonomic scope" value="Bacteria"/>
</dbReference>
<dbReference type="Proteomes" id="UP000001175">
    <property type="component" value="Chromosome"/>
</dbReference>
<dbReference type="GO" id="GO:0022627">
    <property type="term" value="C:cytosolic small ribosomal subunit"/>
    <property type="evidence" value="ECO:0007669"/>
    <property type="project" value="TreeGrafter"/>
</dbReference>
<dbReference type="GO" id="GO:0070181">
    <property type="term" value="F:small ribosomal subunit rRNA binding"/>
    <property type="evidence" value="ECO:0007669"/>
    <property type="project" value="TreeGrafter"/>
</dbReference>
<dbReference type="GO" id="GO:0003735">
    <property type="term" value="F:structural constituent of ribosome"/>
    <property type="evidence" value="ECO:0007669"/>
    <property type="project" value="InterPro"/>
</dbReference>
<dbReference type="GO" id="GO:0006412">
    <property type="term" value="P:translation"/>
    <property type="evidence" value="ECO:0007669"/>
    <property type="project" value="UniProtKB-UniRule"/>
</dbReference>
<dbReference type="FunFam" id="4.10.640.10:FF:000002">
    <property type="entry name" value="30S ribosomal protein S18, chloroplastic"/>
    <property type="match status" value="1"/>
</dbReference>
<dbReference type="Gene3D" id="4.10.640.10">
    <property type="entry name" value="Ribosomal protein S18"/>
    <property type="match status" value="1"/>
</dbReference>
<dbReference type="HAMAP" id="MF_00270">
    <property type="entry name" value="Ribosomal_bS18"/>
    <property type="match status" value="1"/>
</dbReference>
<dbReference type="InterPro" id="IPR001648">
    <property type="entry name" value="Ribosomal_bS18"/>
</dbReference>
<dbReference type="InterPro" id="IPR018275">
    <property type="entry name" value="Ribosomal_bS18_CS"/>
</dbReference>
<dbReference type="InterPro" id="IPR036870">
    <property type="entry name" value="Ribosomal_bS18_sf"/>
</dbReference>
<dbReference type="NCBIfam" id="TIGR00165">
    <property type="entry name" value="S18"/>
    <property type="match status" value="1"/>
</dbReference>
<dbReference type="PANTHER" id="PTHR13479">
    <property type="entry name" value="30S RIBOSOMAL PROTEIN S18"/>
    <property type="match status" value="1"/>
</dbReference>
<dbReference type="PANTHER" id="PTHR13479:SF40">
    <property type="entry name" value="SMALL RIBOSOMAL SUBUNIT PROTEIN BS18M"/>
    <property type="match status" value="1"/>
</dbReference>
<dbReference type="Pfam" id="PF01084">
    <property type="entry name" value="Ribosomal_S18"/>
    <property type="match status" value="1"/>
</dbReference>
<dbReference type="PRINTS" id="PR00974">
    <property type="entry name" value="RIBOSOMALS18"/>
</dbReference>
<dbReference type="SUPFAM" id="SSF46911">
    <property type="entry name" value="Ribosomal protein S18"/>
    <property type="match status" value="1"/>
</dbReference>
<dbReference type="PROSITE" id="PS00057">
    <property type="entry name" value="RIBOSOMAL_S18"/>
    <property type="match status" value="1"/>
</dbReference>
<evidence type="ECO:0000255" key="1">
    <source>
        <dbReference type="HAMAP-Rule" id="MF_00270"/>
    </source>
</evidence>
<evidence type="ECO:0000305" key="2"/>
<name>RS18_SYNP6</name>
<reference key="1">
    <citation type="journal article" date="2007" name="Photosyn. Res.">
        <title>Complete nucleotide sequence of the freshwater unicellular cyanobacterium Synechococcus elongatus PCC 6301 chromosome: gene content and organization.</title>
        <authorList>
            <person name="Sugita C."/>
            <person name="Ogata K."/>
            <person name="Shikata M."/>
            <person name="Jikuya H."/>
            <person name="Takano J."/>
            <person name="Furumichi M."/>
            <person name="Kanehisa M."/>
            <person name="Omata T."/>
            <person name="Sugiura M."/>
            <person name="Sugita M."/>
        </authorList>
    </citation>
    <scope>NUCLEOTIDE SEQUENCE [LARGE SCALE GENOMIC DNA]</scope>
    <source>
        <strain>ATCC 27144 / PCC 6301 / SAUG 1402/1</strain>
    </source>
</reference>
<proteinExistence type="inferred from homology"/>
<sequence>MSYFRRRLSPIKPSDPIDYKDVDLLRKFITERGKILPRRITGLTARQQRDLAVAIKRARILALLPFLNQEG</sequence>
<organism>
    <name type="scientific">Synechococcus sp. (strain ATCC 27144 / PCC 6301 / SAUG 1402/1)</name>
    <name type="common">Anacystis nidulans</name>
    <dbReference type="NCBI Taxonomy" id="269084"/>
    <lineage>
        <taxon>Bacteria</taxon>
        <taxon>Bacillati</taxon>
        <taxon>Cyanobacteriota</taxon>
        <taxon>Cyanophyceae</taxon>
        <taxon>Synechococcales</taxon>
        <taxon>Synechococcaceae</taxon>
        <taxon>Synechococcus</taxon>
    </lineage>
</organism>
<keyword id="KW-0687">Ribonucleoprotein</keyword>
<keyword id="KW-0689">Ribosomal protein</keyword>
<keyword id="KW-0694">RNA-binding</keyword>
<keyword id="KW-0699">rRNA-binding</keyword>
<feature type="chain" id="PRO_1000003641" description="Small ribosomal subunit protein bS18">
    <location>
        <begin position="1"/>
        <end position="71"/>
    </location>
</feature>
<gene>
    <name evidence="1" type="primary">rpsR</name>
    <name evidence="1" type="synonym">rps18</name>
    <name type="ordered locus">syc0426_c</name>
</gene>
<accession>Q5N503</accession>
<comment type="function">
    <text evidence="1">Binds as a heterodimer with protein bS6 to the central domain of the 16S rRNA, where it helps stabilize the platform of the 30S subunit.</text>
</comment>
<comment type="subunit">
    <text evidence="1">Part of the 30S ribosomal subunit. Forms a tight heterodimer with protein bS6.</text>
</comment>
<comment type="similarity">
    <text evidence="1">Belongs to the bacterial ribosomal protein bS18 family.</text>
</comment>
<protein>
    <recommendedName>
        <fullName evidence="1">Small ribosomal subunit protein bS18</fullName>
    </recommendedName>
    <alternativeName>
        <fullName evidence="2">30S ribosomal protein S18</fullName>
    </alternativeName>
</protein>